<evidence type="ECO:0000250" key="1">
    <source>
        <dbReference type="UniProtKB" id="Q9P0P0"/>
    </source>
</evidence>
<evidence type="ECO:0000255" key="2">
    <source>
        <dbReference type="PROSITE-ProRule" id="PRU00175"/>
    </source>
</evidence>
<evidence type="ECO:0000256" key="3">
    <source>
        <dbReference type="SAM" id="MobiDB-lite"/>
    </source>
</evidence>
<evidence type="ECO:0000305" key="4"/>
<reference key="1">
    <citation type="journal article" date="2004" name="Genome Res.">
        <title>The status, quality, and expansion of the NIH full-length cDNA project: the Mammalian Gene Collection (MGC).</title>
        <authorList>
            <consortium name="The MGC Project Team"/>
        </authorList>
    </citation>
    <scope>NUCLEOTIDE SEQUENCE [LARGE SCALE MRNA]</scope>
    <source>
        <tissue>Testis</tissue>
    </source>
</reference>
<reference key="2">
    <citation type="submission" date="2007-09" db="UniProtKB">
        <authorList>
            <person name="Lubec G."/>
            <person name="Kang S.U."/>
            <person name="Lubec S."/>
        </authorList>
    </citation>
    <scope>PROTEIN SEQUENCE OF 21-29</scope>
    <scope>IDENTIFICATION BY MASS SPECTROMETRY</scope>
    <source>
        <strain>Sprague-Dawley</strain>
        <tissue>Brain</tissue>
    </source>
</reference>
<name>RN181_RAT</name>
<keyword id="KW-0903">Direct protein sequencing</keyword>
<keyword id="KW-0479">Metal-binding</keyword>
<keyword id="KW-0597">Phosphoprotein</keyword>
<keyword id="KW-1185">Reference proteome</keyword>
<keyword id="KW-0808">Transferase</keyword>
<keyword id="KW-0832">Ubl conjugation</keyword>
<keyword id="KW-0833">Ubl conjugation pathway</keyword>
<keyword id="KW-0862">Zinc</keyword>
<keyword id="KW-0863">Zinc-finger</keyword>
<comment type="function">
    <text evidence="1">E3 ubiquitin-protein ligase which accepts ubiquitin from an E2 ubiquitin-conjugating enzyme in the form of a thioester and then directly transfers the ubiquitin to targeted substrates. Catalyzes monoubiquitination of 26S proteasome subunit PSMC2/RPT1.</text>
</comment>
<comment type="catalytic activity">
    <reaction evidence="1">
        <text>S-ubiquitinyl-[E2 ubiquitin-conjugating enzyme]-L-cysteine + [acceptor protein]-L-lysine = [E2 ubiquitin-conjugating enzyme]-L-cysteine + N(6)-ubiquitinyl-[acceptor protein]-L-lysine.</text>
        <dbReference type="EC" id="2.3.2.27"/>
    </reaction>
</comment>
<comment type="pathway">
    <text evidence="1">Protein modification; protein ubiquitination.</text>
</comment>
<comment type="subunit">
    <text evidence="1">Directly interacts with ITGA2B and, as a result, with integrin ITGA2B/ITGB3. There is no evidence that integrin ITGA2B/ITGB3 is an endogenous substrate for RNF181-directed ubiquitination.</text>
</comment>
<comment type="PTM">
    <text evidence="1">Auto-ubiquitinated as part of the enzymatic reaction.</text>
</comment>
<comment type="similarity">
    <text evidence="4">Belongs to the RNF181 family.</text>
</comment>
<dbReference type="EC" id="2.3.2.27" evidence="1"/>
<dbReference type="EMBL" id="BC079313">
    <property type="protein sequence ID" value="AAH79313.1"/>
    <property type="molecule type" value="mRNA"/>
</dbReference>
<dbReference type="RefSeq" id="NP_001007648.1">
    <property type="nucleotide sequence ID" value="NM_001007647.1"/>
</dbReference>
<dbReference type="RefSeq" id="XP_063141849.1">
    <property type="nucleotide sequence ID" value="XM_063285779.1"/>
</dbReference>
<dbReference type="SMR" id="Q6AXU4"/>
<dbReference type="BioGRID" id="255552">
    <property type="interactions" value="1"/>
</dbReference>
<dbReference type="FunCoup" id="Q6AXU4">
    <property type="interactions" value="496"/>
</dbReference>
<dbReference type="STRING" id="10116.ENSRNOP00000016699"/>
<dbReference type="PhosphoSitePlus" id="Q6AXU4"/>
<dbReference type="PaxDb" id="10116-ENSRNOP00000016699"/>
<dbReference type="Ensembl" id="ENSRNOT00000016699.7">
    <property type="protein sequence ID" value="ENSRNOP00000016699.3"/>
    <property type="gene ID" value="ENSRNOG00000012035.7"/>
</dbReference>
<dbReference type="GeneID" id="297337"/>
<dbReference type="KEGG" id="rno:297337"/>
<dbReference type="UCSC" id="RGD:1359698">
    <property type="organism name" value="rat"/>
</dbReference>
<dbReference type="AGR" id="RGD:1359698"/>
<dbReference type="CTD" id="51255"/>
<dbReference type="RGD" id="1359698">
    <property type="gene designation" value="Rnf181"/>
</dbReference>
<dbReference type="eggNOG" id="KOG0800">
    <property type="taxonomic scope" value="Eukaryota"/>
</dbReference>
<dbReference type="GeneTree" id="ENSGT00940000160552"/>
<dbReference type="HOGENOM" id="CLU_144247_0_0_1"/>
<dbReference type="InParanoid" id="Q6AXU4"/>
<dbReference type="OMA" id="EHLHGAM"/>
<dbReference type="OrthoDB" id="21204at2759"/>
<dbReference type="PhylomeDB" id="Q6AXU4"/>
<dbReference type="Reactome" id="R-RNO-8866654">
    <property type="pathway name" value="E3 ubiquitin ligases ubiquitinate target proteins"/>
</dbReference>
<dbReference type="UniPathway" id="UPA00143"/>
<dbReference type="PRO" id="PR:Q6AXU4"/>
<dbReference type="Proteomes" id="UP000002494">
    <property type="component" value="Chromosome 4"/>
</dbReference>
<dbReference type="Bgee" id="ENSRNOG00000012035">
    <property type="expression patterns" value="Expressed in testis and 20 other cell types or tissues"/>
</dbReference>
<dbReference type="GO" id="GO:0005737">
    <property type="term" value="C:cytoplasm"/>
    <property type="evidence" value="ECO:0000318"/>
    <property type="project" value="GO_Central"/>
</dbReference>
<dbReference type="GO" id="GO:0061630">
    <property type="term" value="F:ubiquitin protein ligase activity"/>
    <property type="evidence" value="ECO:0000250"/>
    <property type="project" value="UniProtKB"/>
</dbReference>
<dbReference type="GO" id="GO:0004842">
    <property type="term" value="F:ubiquitin-protein transferase activity"/>
    <property type="evidence" value="ECO:0000266"/>
    <property type="project" value="RGD"/>
</dbReference>
<dbReference type="GO" id="GO:0008270">
    <property type="term" value="F:zinc ion binding"/>
    <property type="evidence" value="ECO:0007669"/>
    <property type="project" value="UniProtKB-KW"/>
</dbReference>
<dbReference type="GO" id="GO:0051865">
    <property type="term" value="P:protein autoubiquitination"/>
    <property type="evidence" value="ECO:0000266"/>
    <property type="project" value="RGD"/>
</dbReference>
<dbReference type="GO" id="GO:0016567">
    <property type="term" value="P:protein ubiquitination"/>
    <property type="evidence" value="ECO:0000318"/>
    <property type="project" value="GO_Central"/>
</dbReference>
<dbReference type="CDD" id="cd16669">
    <property type="entry name" value="RING-H2_RNF181"/>
    <property type="match status" value="1"/>
</dbReference>
<dbReference type="FunFam" id="3.30.40.10:FF:000127">
    <property type="entry name" value="E3 ubiquitin-protein ligase RNF181"/>
    <property type="match status" value="1"/>
</dbReference>
<dbReference type="Gene3D" id="3.30.40.10">
    <property type="entry name" value="Zinc/RING finger domain, C3HC4 (zinc finger)"/>
    <property type="match status" value="1"/>
</dbReference>
<dbReference type="InterPro" id="IPR001841">
    <property type="entry name" value="Znf_RING"/>
</dbReference>
<dbReference type="InterPro" id="IPR013083">
    <property type="entry name" value="Znf_RING/FYVE/PHD"/>
</dbReference>
<dbReference type="PANTHER" id="PTHR15710">
    <property type="entry name" value="E3 UBIQUITIN-PROTEIN LIGASE PRAJA"/>
    <property type="match status" value="1"/>
</dbReference>
<dbReference type="PANTHER" id="PTHR15710:SF160">
    <property type="entry name" value="E3 UBIQUITIN-PROTEIN LIGASE RNF181"/>
    <property type="match status" value="1"/>
</dbReference>
<dbReference type="Pfam" id="PF13639">
    <property type="entry name" value="zf-RING_2"/>
    <property type="match status" value="1"/>
</dbReference>
<dbReference type="SMART" id="SM00184">
    <property type="entry name" value="RING"/>
    <property type="match status" value="1"/>
</dbReference>
<dbReference type="SUPFAM" id="SSF57850">
    <property type="entry name" value="RING/U-box"/>
    <property type="match status" value="1"/>
</dbReference>
<dbReference type="PROSITE" id="PS50089">
    <property type="entry name" value="ZF_RING_2"/>
    <property type="match status" value="1"/>
</dbReference>
<protein>
    <recommendedName>
        <fullName evidence="4">E3 ubiquitin-protein ligase RNF181</fullName>
        <ecNumber evidence="1">2.3.2.27</ecNumber>
    </recommendedName>
    <alternativeName>
        <fullName>RING finger protein 181</fullName>
    </alternativeName>
</protein>
<sequence length="165" mass="19288">MASYFDEHDCEPLNPEREARNNMLLELARRVRGAWSWAPGSRSLFNRMDFEDLGLVDWEHHLPPPAAKAVVESLPRTVIRSSKAELKCPVCLLEFEEEETVIEMPCHHLFHSNCILPWLSKTNSCPLCRHELPTDDDSYEEHKKDKARRQQQQHRLENLHGAMYT</sequence>
<proteinExistence type="evidence at protein level"/>
<accession>Q6AXU4</accession>
<feature type="chain" id="PRO_0000295176" description="E3 ubiquitin-protein ligase RNF181">
    <location>
        <begin position="1"/>
        <end position="165"/>
    </location>
</feature>
<feature type="zinc finger region" description="RING-type; atypical" evidence="2">
    <location>
        <begin position="88"/>
        <end position="129"/>
    </location>
</feature>
<feature type="region of interest" description="Disordered" evidence="3">
    <location>
        <begin position="136"/>
        <end position="165"/>
    </location>
</feature>
<feature type="modified residue" description="Phosphothreonine" evidence="1">
    <location>
        <position position="165"/>
    </location>
</feature>
<organism>
    <name type="scientific">Rattus norvegicus</name>
    <name type="common">Rat</name>
    <dbReference type="NCBI Taxonomy" id="10116"/>
    <lineage>
        <taxon>Eukaryota</taxon>
        <taxon>Metazoa</taxon>
        <taxon>Chordata</taxon>
        <taxon>Craniata</taxon>
        <taxon>Vertebrata</taxon>
        <taxon>Euteleostomi</taxon>
        <taxon>Mammalia</taxon>
        <taxon>Eutheria</taxon>
        <taxon>Euarchontoglires</taxon>
        <taxon>Glires</taxon>
        <taxon>Rodentia</taxon>
        <taxon>Myomorpha</taxon>
        <taxon>Muroidea</taxon>
        <taxon>Muridae</taxon>
        <taxon>Murinae</taxon>
        <taxon>Rattus</taxon>
    </lineage>
</organism>
<gene>
    <name type="primary">Rnf181</name>
</gene>